<protein>
    <recommendedName>
        <fullName evidence="1">Adenylate kinase</fullName>
        <shortName evidence="1">AK</shortName>
        <ecNumber evidence="1">2.7.4.3</ecNumber>
    </recommendedName>
    <alternativeName>
        <fullName evidence="1">ATP-AMP transphosphorylase</fullName>
    </alternativeName>
    <alternativeName>
        <fullName evidence="1">ATP:AMP phosphotransferase</fullName>
    </alternativeName>
    <alternativeName>
        <fullName evidence="1">Adenylate monophosphate kinase</fullName>
    </alternativeName>
</protein>
<proteinExistence type="inferred from homology"/>
<sequence>MRIILLGAPGAGKGTQAQFIMEKYGIPQISTGDMLRAAVKAGSELGLKAKEIMDAGKLVTDELVIALVKERITQEDCRDGFLLDGFPRTIPQADAMKEAGIKVDYVLEFDVPDELIVERIVGRRVHAASGRVYHVKFNPPKVEDKDDVTGEELTIRKDDQEATVRKRLIEYHQQTAPLVSYYHKEADAGNTQYFKLDGTRNVAEVSAELATILG</sequence>
<feature type="chain" id="PRO_1000100631" description="Adenylate kinase">
    <location>
        <begin position="1"/>
        <end position="214"/>
    </location>
</feature>
<feature type="region of interest" description="NMP" evidence="1">
    <location>
        <begin position="30"/>
        <end position="59"/>
    </location>
</feature>
<feature type="region of interest" description="LID">
    <location>
        <begin position="122"/>
        <end position="159"/>
    </location>
</feature>
<feature type="binding site" evidence="1">
    <location>
        <begin position="10"/>
        <end position="15"/>
    </location>
    <ligand>
        <name>ATP</name>
        <dbReference type="ChEBI" id="CHEBI:30616"/>
    </ligand>
</feature>
<feature type="binding site" evidence="1">
    <location>
        <position position="31"/>
    </location>
    <ligand>
        <name>AMP</name>
        <dbReference type="ChEBI" id="CHEBI:456215"/>
    </ligand>
</feature>
<feature type="binding site" evidence="1">
    <location>
        <position position="36"/>
    </location>
    <ligand>
        <name>AMP</name>
        <dbReference type="ChEBI" id="CHEBI:456215"/>
    </ligand>
</feature>
<feature type="binding site" evidence="1">
    <location>
        <begin position="57"/>
        <end position="59"/>
    </location>
    <ligand>
        <name>AMP</name>
        <dbReference type="ChEBI" id="CHEBI:456215"/>
    </ligand>
</feature>
<feature type="binding site" evidence="1">
    <location>
        <begin position="85"/>
        <end position="88"/>
    </location>
    <ligand>
        <name>AMP</name>
        <dbReference type="ChEBI" id="CHEBI:456215"/>
    </ligand>
</feature>
<feature type="binding site" evidence="1">
    <location>
        <position position="92"/>
    </location>
    <ligand>
        <name>AMP</name>
        <dbReference type="ChEBI" id="CHEBI:456215"/>
    </ligand>
</feature>
<feature type="binding site" evidence="1">
    <location>
        <position position="123"/>
    </location>
    <ligand>
        <name>ATP</name>
        <dbReference type="ChEBI" id="CHEBI:30616"/>
    </ligand>
</feature>
<feature type="binding site" evidence="1">
    <location>
        <begin position="132"/>
        <end position="133"/>
    </location>
    <ligand>
        <name>ATP</name>
        <dbReference type="ChEBI" id="CHEBI:30616"/>
    </ligand>
</feature>
<feature type="binding site" evidence="1">
    <location>
        <position position="156"/>
    </location>
    <ligand>
        <name>AMP</name>
        <dbReference type="ChEBI" id="CHEBI:456215"/>
    </ligand>
</feature>
<feature type="binding site" evidence="1">
    <location>
        <position position="167"/>
    </location>
    <ligand>
        <name>AMP</name>
        <dbReference type="ChEBI" id="CHEBI:456215"/>
    </ligand>
</feature>
<feature type="binding site" evidence="1">
    <location>
        <position position="200"/>
    </location>
    <ligand>
        <name>ATP</name>
        <dbReference type="ChEBI" id="CHEBI:30616"/>
    </ligand>
</feature>
<comment type="function">
    <text evidence="1">Catalyzes the reversible transfer of the terminal phosphate group between ATP and AMP. Plays an important role in cellular energy homeostasis and in adenine nucleotide metabolism.</text>
</comment>
<comment type="catalytic activity">
    <reaction evidence="1">
        <text>AMP + ATP = 2 ADP</text>
        <dbReference type="Rhea" id="RHEA:12973"/>
        <dbReference type="ChEBI" id="CHEBI:30616"/>
        <dbReference type="ChEBI" id="CHEBI:456215"/>
        <dbReference type="ChEBI" id="CHEBI:456216"/>
        <dbReference type="EC" id="2.7.4.3"/>
    </reaction>
</comment>
<comment type="pathway">
    <text evidence="1">Purine metabolism; AMP biosynthesis via salvage pathway; AMP from ADP: step 1/1.</text>
</comment>
<comment type="subunit">
    <text evidence="1">Monomer.</text>
</comment>
<comment type="subcellular location">
    <subcellularLocation>
        <location evidence="1">Cytoplasm</location>
    </subcellularLocation>
</comment>
<comment type="domain">
    <text evidence="1">Consists of three domains, a large central CORE domain and two small peripheral domains, NMPbind and LID, which undergo movements during catalysis. The LID domain closes over the site of phosphoryl transfer upon ATP binding. Assembling and dissambling the active center during each catalytic cycle provides an effective means to prevent ATP hydrolysis.</text>
</comment>
<comment type="similarity">
    <text evidence="1">Belongs to the adenylate kinase family.</text>
</comment>
<gene>
    <name evidence="1" type="primary">adk</name>
    <name type="ordered locus">YPTS_1039</name>
</gene>
<dbReference type="EC" id="2.7.4.3" evidence="1"/>
<dbReference type="EMBL" id="CP001048">
    <property type="protein sequence ID" value="ACC88020.1"/>
    <property type="molecule type" value="Genomic_DNA"/>
</dbReference>
<dbReference type="RefSeq" id="WP_002208600.1">
    <property type="nucleotide sequence ID" value="NZ_CP009780.1"/>
</dbReference>
<dbReference type="SMR" id="B2K6Z6"/>
<dbReference type="GeneID" id="57975593"/>
<dbReference type="KEGG" id="ypb:YPTS_1039"/>
<dbReference type="PATRIC" id="fig|502801.10.peg.382"/>
<dbReference type="UniPathway" id="UPA00588">
    <property type="reaction ID" value="UER00649"/>
</dbReference>
<dbReference type="GO" id="GO:0005737">
    <property type="term" value="C:cytoplasm"/>
    <property type="evidence" value="ECO:0007669"/>
    <property type="project" value="UniProtKB-SubCell"/>
</dbReference>
<dbReference type="GO" id="GO:0004017">
    <property type="term" value="F:adenylate kinase activity"/>
    <property type="evidence" value="ECO:0007669"/>
    <property type="project" value="UniProtKB-UniRule"/>
</dbReference>
<dbReference type="GO" id="GO:0005524">
    <property type="term" value="F:ATP binding"/>
    <property type="evidence" value="ECO:0007669"/>
    <property type="project" value="UniProtKB-UniRule"/>
</dbReference>
<dbReference type="GO" id="GO:0044209">
    <property type="term" value="P:AMP salvage"/>
    <property type="evidence" value="ECO:0007669"/>
    <property type="project" value="UniProtKB-UniRule"/>
</dbReference>
<dbReference type="CDD" id="cd01428">
    <property type="entry name" value="ADK"/>
    <property type="match status" value="1"/>
</dbReference>
<dbReference type="FunFam" id="3.40.50.300:FF:000106">
    <property type="entry name" value="Adenylate kinase mitochondrial"/>
    <property type="match status" value="1"/>
</dbReference>
<dbReference type="Gene3D" id="3.40.50.300">
    <property type="entry name" value="P-loop containing nucleotide triphosphate hydrolases"/>
    <property type="match status" value="1"/>
</dbReference>
<dbReference type="HAMAP" id="MF_00235">
    <property type="entry name" value="Adenylate_kinase_Adk"/>
    <property type="match status" value="1"/>
</dbReference>
<dbReference type="InterPro" id="IPR006259">
    <property type="entry name" value="Adenyl_kin_sub"/>
</dbReference>
<dbReference type="InterPro" id="IPR000850">
    <property type="entry name" value="Adenylat/UMP-CMP_kin"/>
</dbReference>
<dbReference type="InterPro" id="IPR033690">
    <property type="entry name" value="Adenylat_kinase_CS"/>
</dbReference>
<dbReference type="InterPro" id="IPR007862">
    <property type="entry name" value="Adenylate_kinase_lid-dom"/>
</dbReference>
<dbReference type="InterPro" id="IPR027417">
    <property type="entry name" value="P-loop_NTPase"/>
</dbReference>
<dbReference type="NCBIfam" id="TIGR01351">
    <property type="entry name" value="adk"/>
    <property type="match status" value="1"/>
</dbReference>
<dbReference type="NCBIfam" id="NF001379">
    <property type="entry name" value="PRK00279.1-1"/>
    <property type="match status" value="1"/>
</dbReference>
<dbReference type="NCBIfam" id="NF001380">
    <property type="entry name" value="PRK00279.1-2"/>
    <property type="match status" value="1"/>
</dbReference>
<dbReference type="NCBIfam" id="NF001381">
    <property type="entry name" value="PRK00279.1-3"/>
    <property type="match status" value="1"/>
</dbReference>
<dbReference type="NCBIfam" id="NF011100">
    <property type="entry name" value="PRK14527.1"/>
    <property type="match status" value="1"/>
</dbReference>
<dbReference type="PANTHER" id="PTHR23359">
    <property type="entry name" value="NUCLEOTIDE KINASE"/>
    <property type="match status" value="1"/>
</dbReference>
<dbReference type="Pfam" id="PF00406">
    <property type="entry name" value="ADK"/>
    <property type="match status" value="1"/>
</dbReference>
<dbReference type="Pfam" id="PF05191">
    <property type="entry name" value="ADK_lid"/>
    <property type="match status" value="1"/>
</dbReference>
<dbReference type="PRINTS" id="PR00094">
    <property type="entry name" value="ADENYLTKNASE"/>
</dbReference>
<dbReference type="SUPFAM" id="SSF52540">
    <property type="entry name" value="P-loop containing nucleoside triphosphate hydrolases"/>
    <property type="match status" value="1"/>
</dbReference>
<dbReference type="PROSITE" id="PS00113">
    <property type="entry name" value="ADENYLATE_KINASE"/>
    <property type="match status" value="1"/>
</dbReference>
<organism>
    <name type="scientific">Yersinia pseudotuberculosis serotype IB (strain PB1/+)</name>
    <dbReference type="NCBI Taxonomy" id="502801"/>
    <lineage>
        <taxon>Bacteria</taxon>
        <taxon>Pseudomonadati</taxon>
        <taxon>Pseudomonadota</taxon>
        <taxon>Gammaproteobacteria</taxon>
        <taxon>Enterobacterales</taxon>
        <taxon>Yersiniaceae</taxon>
        <taxon>Yersinia</taxon>
    </lineage>
</organism>
<keyword id="KW-0067">ATP-binding</keyword>
<keyword id="KW-0963">Cytoplasm</keyword>
<keyword id="KW-0418">Kinase</keyword>
<keyword id="KW-0545">Nucleotide biosynthesis</keyword>
<keyword id="KW-0547">Nucleotide-binding</keyword>
<keyword id="KW-0808">Transferase</keyword>
<evidence type="ECO:0000255" key="1">
    <source>
        <dbReference type="HAMAP-Rule" id="MF_00235"/>
    </source>
</evidence>
<reference key="1">
    <citation type="submission" date="2008-04" db="EMBL/GenBank/DDBJ databases">
        <title>Complete sequence of Yersinia pseudotuberculosis PB1/+.</title>
        <authorList>
            <person name="Copeland A."/>
            <person name="Lucas S."/>
            <person name="Lapidus A."/>
            <person name="Glavina del Rio T."/>
            <person name="Dalin E."/>
            <person name="Tice H."/>
            <person name="Bruce D."/>
            <person name="Goodwin L."/>
            <person name="Pitluck S."/>
            <person name="Munk A.C."/>
            <person name="Brettin T."/>
            <person name="Detter J.C."/>
            <person name="Han C."/>
            <person name="Tapia R."/>
            <person name="Schmutz J."/>
            <person name="Larimer F."/>
            <person name="Land M."/>
            <person name="Hauser L."/>
            <person name="Challacombe J.F."/>
            <person name="Green L."/>
            <person name="Lindler L.E."/>
            <person name="Nikolich M.P."/>
            <person name="Richardson P."/>
        </authorList>
    </citation>
    <scope>NUCLEOTIDE SEQUENCE [LARGE SCALE GENOMIC DNA]</scope>
    <source>
        <strain>PB1/+</strain>
    </source>
</reference>
<name>KAD_YERPB</name>
<accession>B2K6Z6</accession>